<comment type="function">
    <text evidence="10">Myosin heavy chain that is required for the cell cycle-regulated transport of various organelles and proteins for their segregation. Functions by binding with its tail domain to receptor proteins on organelles and exerting force with its N-terminal motor domain against actin filaments, thereby transporting its cargo along polarized actin cables.</text>
</comment>
<comment type="subunit">
    <text evidence="1">Homodimer.</text>
</comment>
<comment type="subcellular location">
    <subcellularLocation>
        <location evidence="7">Cytoplasm</location>
    </subcellularLocation>
    <text>Colocalizes with cytoplasmic vesicles and/or organelles.</text>
</comment>
<comment type="domain">
    <text evidence="1">IQ domain mediates interaction with calmodulin.</text>
</comment>
<comment type="domain">
    <text evidence="1">The tail domain is a globular cargo-binding domain.</text>
</comment>
<comment type="disruption phenotype">
    <text evidence="8 9">No visible phenotype.</text>
</comment>
<comment type="similarity">
    <text evidence="11">Belongs to the TRAFAC class myosin-kinesin ATPase superfamily. Myosin family. Plant myosin class XI subfamily.</text>
</comment>
<comment type="sequence caution" evidence="11">
    <conflict type="erroneous gene model prediction">
        <sequence resource="EMBL-CDS" id="AAC16753"/>
    </conflict>
</comment>
<proteinExistence type="inferred from homology"/>
<reference key="1">
    <citation type="journal article" date="2000" name="Nature">
        <title>Sequence and analysis of chromosome 1 of the plant Arabidopsis thaliana.</title>
        <authorList>
            <person name="Theologis A."/>
            <person name="Ecker J.R."/>
            <person name="Palm C.J."/>
            <person name="Federspiel N.A."/>
            <person name="Kaul S."/>
            <person name="White O."/>
            <person name="Alonso J."/>
            <person name="Altafi H."/>
            <person name="Araujo R."/>
            <person name="Bowman C.L."/>
            <person name="Brooks S.Y."/>
            <person name="Buehler E."/>
            <person name="Chan A."/>
            <person name="Chao Q."/>
            <person name="Chen H."/>
            <person name="Cheuk R.F."/>
            <person name="Chin C.W."/>
            <person name="Chung M.K."/>
            <person name="Conn L."/>
            <person name="Conway A.B."/>
            <person name="Conway A.R."/>
            <person name="Creasy T.H."/>
            <person name="Dewar K."/>
            <person name="Dunn P."/>
            <person name="Etgu P."/>
            <person name="Feldblyum T.V."/>
            <person name="Feng J.-D."/>
            <person name="Fong B."/>
            <person name="Fujii C.Y."/>
            <person name="Gill J.E."/>
            <person name="Goldsmith A.D."/>
            <person name="Haas B."/>
            <person name="Hansen N.F."/>
            <person name="Hughes B."/>
            <person name="Huizar L."/>
            <person name="Hunter J.L."/>
            <person name="Jenkins J."/>
            <person name="Johnson-Hopson C."/>
            <person name="Khan S."/>
            <person name="Khaykin E."/>
            <person name="Kim C.J."/>
            <person name="Koo H.L."/>
            <person name="Kremenetskaia I."/>
            <person name="Kurtz D.B."/>
            <person name="Kwan A."/>
            <person name="Lam B."/>
            <person name="Langin-Hooper S."/>
            <person name="Lee A."/>
            <person name="Lee J.M."/>
            <person name="Lenz C.A."/>
            <person name="Li J.H."/>
            <person name="Li Y.-P."/>
            <person name="Lin X."/>
            <person name="Liu S.X."/>
            <person name="Liu Z.A."/>
            <person name="Luros J.S."/>
            <person name="Maiti R."/>
            <person name="Marziali A."/>
            <person name="Militscher J."/>
            <person name="Miranda M."/>
            <person name="Nguyen M."/>
            <person name="Nierman W.C."/>
            <person name="Osborne B.I."/>
            <person name="Pai G."/>
            <person name="Peterson J."/>
            <person name="Pham P.K."/>
            <person name="Rizzo M."/>
            <person name="Rooney T."/>
            <person name="Rowley D."/>
            <person name="Sakano H."/>
            <person name="Salzberg S.L."/>
            <person name="Schwartz J.R."/>
            <person name="Shinn P."/>
            <person name="Southwick A.M."/>
            <person name="Sun H."/>
            <person name="Tallon L.J."/>
            <person name="Tambunga G."/>
            <person name="Toriumi M.J."/>
            <person name="Town C.D."/>
            <person name="Utterback T."/>
            <person name="Van Aken S."/>
            <person name="Vaysberg M."/>
            <person name="Vysotskaia V.S."/>
            <person name="Walker M."/>
            <person name="Wu D."/>
            <person name="Yu G."/>
            <person name="Fraser C.M."/>
            <person name="Venter J.C."/>
            <person name="Davis R.W."/>
        </authorList>
    </citation>
    <scope>NUCLEOTIDE SEQUENCE [LARGE SCALE GENOMIC DNA]</scope>
    <source>
        <strain>cv. Columbia</strain>
    </source>
</reference>
<reference key="2">
    <citation type="journal article" date="2017" name="Plant J.">
        <title>Araport11: a complete reannotation of the Arabidopsis thaliana reference genome.</title>
        <authorList>
            <person name="Cheng C.Y."/>
            <person name="Krishnakumar V."/>
            <person name="Chan A.P."/>
            <person name="Thibaud-Nissen F."/>
            <person name="Schobel S."/>
            <person name="Town C.D."/>
        </authorList>
    </citation>
    <scope>GENOME REANNOTATION</scope>
    <source>
        <strain>cv. Columbia</strain>
    </source>
</reference>
<reference key="3">
    <citation type="journal article" date="2000" name="J. Cell Sci.">
        <title>A myosin family tree.</title>
        <authorList>
            <person name="Hodge T."/>
            <person name="Cope M.J."/>
        </authorList>
    </citation>
    <scope>GENE FAMILY</scope>
</reference>
<reference key="4">
    <citation type="journal article" date="2001" name="Genome Biol.">
        <title>Analysis of the myosins encoded in the recently completed Arabidopsis thaliana genome sequence.</title>
        <authorList>
            <person name="Reddy A.S."/>
            <person name="Day I.S."/>
        </authorList>
    </citation>
    <scope>GENE FAMILY</scope>
</reference>
<reference key="5">
    <citation type="journal article" date="2007" name="BMC Plant Biol.">
        <title>Association of six YFP-myosin XI-tail fusions with mobile plant cell organelles.</title>
        <authorList>
            <person name="Reisen D."/>
            <person name="Hanson M.R."/>
        </authorList>
    </citation>
    <scope>SUBCELLULAR LOCATION</scope>
</reference>
<reference key="6">
    <citation type="journal article" date="2008" name="Plant Physiol.">
        <title>Two class XI myosins function in organelle trafficking and root hair development in Arabidopsis.</title>
        <authorList>
            <person name="Peremyslov V.V."/>
            <person name="Prokhnevsky A.I."/>
            <person name="Avisar D."/>
            <person name="Dolja V.V."/>
        </authorList>
    </citation>
    <scope>DISRUPTION PHENOTYPE</scope>
</reference>
<reference key="7">
    <citation type="journal article" date="2008" name="Proc. Natl. Acad. Sci. U.S.A.">
        <title>Overlapping functions of the four class XI myosins in Arabidopsis growth, root hair elongation, and organelle motility.</title>
        <authorList>
            <person name="Prokhnevsky A.I."/>
            <person name="Peremyslov V.V."/>
            <person name="Dolja V.V."/>
        </authorList>
    </citation>
    <scope>DISRUPTION PHENOTYPE</scope>
</reference>
<reference key="8">
    <citation type="journal article" date="2010" name="Plant Cell">
        <title>Class XI myosins are required for development, cell expansion, and F-Actin organization in Arabidopsis.</title>
        <authorList>
            <person name="Peremyslov V.V."/>
            <person name="Prokhnevsky A.I."/>
            <person name="Dolja V.V."/>
        </authorList>
    </citation>
    <scope>FUNCTION</scope>
</reference>
<reference key="9">
    <citation type="journal article" date="2011" name="Plant Physiol.">
        <title>Expression, splicing, and evolution of the myosin gene family in plants.</title>
        <authorList>
            <person name="Peremyslov V.V."/>
            <person name="Mockler T.C."/>
            <person name="Filichkin S.A."/>
            <person name="Fox S.E."/>
            <person name="Jaiswal P."/>
            <person name="Makarova K.S."/>
            <person name="Koonin E.V."/>
            <person name="Dolja V.V."/>
        </authorList>
    </citation>
    <scope>GENE FAMILY</scope>
    <scope>NOMENCLATURE</scope>
</reference>
<evidence type="ECO:0000250" key="1"/>
<evidence type="ECO:0000255" key="2"/>
<evidence type="ECO:0000255" key="3">
    <source>
        <dbReference type="PROSITE-ProRule" id="PRU00116"/>
    </source>
</evidence>
<evidence type="ECO:0000255" key="4">
    <source>
        <dbReference type="PROSITE-ProRule" id="PRU00503"/>
    </source>
</evidence>
<evidence type="ECO:0000255" key="5">
    <source>
        <dbReference type="PROSITE-ProRule" id="PRU00782"/>
    </source>
</evidence>
<evidence type="ECO:0000255" key="6">
    <source>
        <dbReference type="PROSITE-ProRule" id="PRU01190"/>
    </source>
</evidence>
<evidence type="ECO:0000269" key="7">
    <source>
    </source>
</evidence>
<evidence type="ECO:0000269" key="8">
    <source>
    </source>
</evidence>
<evidence type="ECO:0000269" key="9">
    <source>
    </source>
</evidence>
<evidence type="ECO:0000269" key="10">
    <source>
    </source>
</evidence>
<evidence type="ECO:0000305" key="11"/>
<sequence>MVATFNPAVGSHVWVEDPDEAWLDGEVVEINGDQIKVLCASGKQVVVKDSNIYPKDVEAPASGVEDMTRLAYLHEPGVLQNLQSRYDINEIYTYTGSILIAVNPFRRLPHLYSSHMMTQYKGASLGELSPHPFAVADAAYRQMVNEGVSQSILVSGESGAGKTESTKLLMRYLAFMGGRGAATEGRTVEQKVLESNPVLEAFGNAKTVKNNNSSRFGKFVEIQFDQSGRISGAAIRTYLLERSRVCQVSDPERNYHCFYMLCAAPEEDAKKFKLGDPKIYHYLNQSKCIQLDAMNDAEEYHATKKAMDVVGISSEEQDAIFRVVASILHLGNIEFAKGTEIDSSIPRDEKSWFHLKTAAELLMCNEKSLEDSLCKRIMATRDETITKTLDPEAALLSRDALAKVMYSRLFDWLVEKINTSIGQDPDSKYLIGVLDIYGFESFKTNSFEQFCINLTNEKLQQHFNQHVFKMEQEEYKKEEINWSYIEFVDNQDILDLIEKKPGGIIALLDEACMFPRSTHETFAQKLYQTYKNHKRFTKPKLARSDFTICHYAGDVTYQTELFLDKNKDYVIAEHQALLNASTCSFVANLFPPVSDDSKQSKFSSIGTRFKQQLVSLLEILNTTEPHYIRCIKPNNLLKPGIFENQNVLQQLRCGGVMEAIRISCAGYPTRKHFDEFLNRFGIIAPQVLDKNSNEPAACKKLLDKAGLEGYQIGKSKVFLRAGQMADLDTRRTEILGRSASIIQRKVRSYLAQKTFIQLRISATQIQAVCRGYLARSIYEGMRREAAALKIQRDLRKFLARKAYTELFSATILIQAGMRGMVSRKELCLRRQTKAATIIQTRCRVYLARLHYRKLKKAAITTQCAWRGKVARKELKNLKMAARETGALQEAKNKLEKQVEELTWRLQLEKRMRTDLEEAKKQENAKYESSLEEIQNKFKETEALLIKEREAAKTVSEVLPIIKEVPVVDQELMEKLTNENEKLKGMVSSLEIKIDETAKELHETARISQDRLKQALAAESKVAKLKTAMQRLEEKISDMETEKQIMLQQTILNTPVKSVAGHPPTATIKNLENGHRTNLENQFNEVEVNGNAGKSAAERQLENVDTLIDCVKENIGFSNGKPIAAFTIYKCLLHWKCFESEKTSAFDRLIEMIGSAIENEDDNGHLAYWLTNTSALLFLLQKSLKPAGAGATASKKPPITTSLFGRMALSFRSSPNLAAAAEAAALAVIRPVEAKYPALLFKQQLAAYVEKIFGMIRDNLKKELSALISMCIQAPRISKGGIQRSARSLGKDSPAIHWQSIIDGLNSLLAILKDNYVPLVLIQKIHTQTFSFVNVQLFNSLLLRKECCTFSNGEFVKSGLAELELWCGQVNEYAGPSWDELKHIRQAVGFLVIHQKYRVSYDDIVHDLCPILSVQQLYRICTLYWDDCYNTRSVSQEVISSMRALMTEESNDADSNSFLLDDNSSIPFSIDEISNSMHEKDFASVKPAKELLENPEFVFLH</sequence>
<keyword id="KW-0009">Actin-binding</keyword>
<keyword id="KW-0067">ATP-binding</keyword>
<keyword id="KW-0112">Calmodulin-binding</keyword>
<keyword id="KW-0175">Coiled coil</keyword>
<keyword id="KW-0963">Cytoplasm</keyword>
<keyword id="KW-0505">Motor protein</keyword>
<keyword id="KW-0518">Myosin</keyword>
<keyword id="KW-0547">Nucleotide-binding</keyword>
<keyword id="KW-1185">Reference proteome</keyword>
<keyword id="KW-0677">Repeat</keyword>
<gene>
    <name type="primary">XI-B</name>
    <name type="synonym">XIB</name>
    <name type="ordered locus">At1g04160</name>
    <name type="ORF">F20D22.7</name>
</gene>
<dbReference type="EMBL" id="AC002411">
    <property type="protein sequence ID" value="AAC16753.1"/>
    <property type="status" value="ALT_SEQ"/>
    <property type="molecule type" value="Genomic_DNA"/>
</dbReference>
<dbReference type="EMBL" id="CP002684">
    <property type="protein sequence ID" value="AEE27664.1"/>
    <property type="molecule type" value="Genomic_DNA"/>
</dbReference>
<dbReference type="PIR" id="T00957">
    <property type="entry name" value="T00957"/>
</dbReference>
<dbReference type="RefSeq" id="NP_171912.2">
    <property type="nucleotide sequence ID" value="NM_100297.3"/>
</dbReference>
<dbReference type="SMR" id="F4I460"/>
<dbReference type="BioGRID" id="24481">
    <property type="interactions" value="1"/>
</dbReference>
<dbReference type="FunCoup" id="F4I460">
    <property type="interactions" value="1139"/>
</dbReference>
<dbReference type="STRING" id="3702.F4I460"/>
<dbReference type="iPTMnet" id="F4I460"/>
<dbReference type="PaxDb" id="3702-AT1G04160.1"/>
<dbReference type="ProteomicsDB" id="248919"/>
<dbReference type="EnsemblPlants" id="AT1G04160.1">
    <property type="protein sequence ID" value="AT1G04160.1"/>
    <property type="gene ID" value="AT1G04160"/>
</dbReference>
<dbReference type="GeneID" id="839246"/>
<dbReference type="Gramene" id="AT1G04160.1">
    <property type="protein sequence ID" value="AT1G04160.1"/>
    <property type="gene ID" value="AT1G04160"/>
</dbReference>
<dbReference type="KEGG" id="ath:AT1G04160"/>
<dbReference type="Araport" id="AT1G04160"/>
<dbReference type="TAIR" id="AT1G04160">
    <property type="gene designation" value="XIB"/>
</dbReference>
<dbReference type="eggNOG" id="KOG0160">
    <property type="taxonomic scope" value="Eukaryota"/>
</dbReference>
<dbReference type="HOGENOM" id="CLU_000192_3_1_1"/>
<dbReference type="InParanoid" id="F4I460"/>
<dbReference type="PRO" id="PR:F4I460"/>
<dbReference type="Proteomes" id="UP000006548">
    <property type="component" value="Chromosome 1"/>
</dbReference>
<dbReference type="ExpressionAtlas" id="F4I460">
    <property type="expression patterns" value="baseline and differential"/>
</dbReference>
<dbReference type="GO" id="GO:0005737">
    <property type="term" value="C:cytoplasm"/>
    <property type="evidence" value="ECO:0007669"/>
    <property type="project" value="UniProtKB-SubCell"/>
</dbReference>
<dbReference type="GO" id="GO:0016459">
    <property type="term" value="C:myosin complex"/>
    <property type="evidence" value="ECO:0007669"/>
    <property type="project" value="UniProtKB-KW"/>
</dbReference>
<dbReference type="GO" id="GO:0051015">
    <property type="term" value="F:actin filament binding"/>
    <property type="evidence" value="ECO:0007669"/>
    <property type="project" value="InterPro"/>
</dbReference>
<dbReference type="GO" id="GO:0005524">
    <property type="term" value="F:ATP binding"/>
    <property type="evidence" value="ECO:0007669"/>
    <property type="project" value="UniProtKB-KW"/>
</dbReference>
<dbReference type="GO" id="GO:0005516">
    <property type="term" value="F:calmodulin binding"/>
    <property type="evidence" value="ECO:0007669"/>
    <property type="project" value="UniProtKB-KW"/>
</dbReference>
<dbReference type="GO" id="GO:0003774">
    <property type="term" value="F:cytoskeletal motor activity"/>
    <property type="evidence" value="ECO:0000250"/>
    <property type="project" value="TAIR"/>
</dbReference>
<dbReference type="GO" id="GO:0007015">
    <property type="term" value="P:actin filament organization"/>
    <property type="evidence" value="ECO:0007669"/>
    <property type="project" value="InterPro"/>
</dbReference>
<dbReference type="GO" id="GO:0030048">
    <property type="term" value="P:actin filament-based movement"/>
    <property type="evidence" value="ECO:0000304"/>
    <property type="project" value="TAIR"/>
</dbReference>
<dbReference type="GO" id="GO:0048767">
    <property type="term" value="P:root hair elongation"/>
    <property type="evidence" value="ECO:0000316"/>
    <property type="project" value="TAIR"/>
</dbReference>
<dbReference type="CDD" id="cd23767">
    <property type="entry name" value="IQCD"/>
    <property type="match status" value="2"/>
</dbReference>
<dbReference type="CDD" id="cd15475">
    <property type="entry name" value="MyosinXI_CBD"/>
    <property type="match status" value="1"/>
</dbReference>
<dbReference type="CDD" id="cd01384">
    <property type="entry name" value="MYSc_Myo11"/>
    <property type="match status" value="1"/>
</dbReference>
<dbReference type="FunFam" id="1.20.58.530:FF:000002">
    <property type="entry name" value="Class V myosin"/>
    <property type="match status" value="1"/>
</dbReference>
<dbReference type="FunFam" id="1.20.120.720:FF:000011">
    <property type="entry name" value="Myosin 2"/>
    <property type="match status" value="1"/>
</dbReference>
<dbReference type="FunFam" id="1.10.10.820:FF:000001">
    <property type="entry name" value="Myosin heavy chain"/>
    <property type="match status" value="1"/>
</dbReference>
<dbReference type="FunFam" id="1.20.5.190:FF:000018">
    <property type="entry name" value="Myosin XI D"/>
    <property type="match status" value="1"/>
</dbReference>
<dbReference type="FunFam" id="1.20.5.190:FF:000001">
    <property type="entry name" value="unconventional myosin-Va"/>
    <property type="match status" value="2"/>
</dbReference>
<dbReference type="Gene3D" id="1.10.10.820">
    <property type="match status" value="1"/>
</dbReference>
<dbReference type="Gene3D" id="1.20.5.190">
    <property type="match status" value="3"/>
</dbReference>
<dbReference type="Gene3D" id="1.20.58.530">
    <property type="match status" value="1"/>
</dbReference>
<dbReference type="Gene3D" id="6.20.240.20">
    <property type="match status" value="1"/>
</dbReference>
<dbReference type="Gene3D" id="3.40.850.10">
    <property type="entry name" value="Kinesin motor domain"/>
    <property type="match status" value="1"/>
</dbReference>
<dbReference type="Gene3D" id="2.30.30.360">
    <property type="entry name" value="Myosin S1 fragment, N-terminal"/>
    <property type="match status" value="1"/>
</dbReference>
<dbReference type="Gene3D" id="1.20.120.720">
    <property type="entry name" value="Myosin VI head, motor domain, U50 subdomain"/>
    <property type="match status" value="1"/>
</dbReference>
<dbReference type="InterPro" id="IPR002710">
    <property type="entry name" value="Dilute_dom"/>
</dbReference>
<dbReference type="InterPro" id="IPR000048">
    <property type="entry name" value="IQ_motif_EF-hand-BS"/>
</dbReference>
<dbReference type="InterPro" id="IPR036961">
    <property type="entry name" value="Kinesin_motor_dom_sf"/>
</dbReference>
<dbReference type="InterPro" id="IPR001609">
    <property type="entry name" value="Myosin_head_motor_dom-like"/>
</dbReference>
<dbReference type="InterPro" id="IPR004009">
    <property type="entry name" value="Myosin_N"/>
</dbReference>
<dbReference type="InterPro" id="IPR008989">
    <property type="entry name" value="Myosin_S1_N"/>
</dbReference>
<dbReference type="InterPro" id="IPR037975">
    <property type="entry name" value="MyosinXI_CBD"/>
</dbReference>
<dbReference type="InterPro" id="IPR036018">
    <property type="entry name" value="MYSc_Myo11"/>
</dbReference>
<dbReference type="InterPro" id="IPR027417">
    <property type="entry name" value="P-loop_NTPase"/>
</dbReference>
<dbReference type="PANTHER" id="PTHR13140">
    <property type="entry name" value="MYOSIN"/>
    <property type="match status" value="1"/>
</dbReference>
<dbReference type="PANTHER" id="PTHR13140:SF757">
    <property type="entry name" value="MYOSIN-8"/>
    <property type="match status" value="1"/>
</dbReference>
<dbReference type="Pfam" id="PF01843">
    <property type="entry name" value="DIL"/>
    <property type="match status" value="1"/>
</dbReference>
<dbReference type="Pfam" id="PF00612">
    <property type="entry name" value="IQ"/>
    <property type="match status" value="6"/>
</dbReference>
<dbReference type="Pfam" id="PF00063">
    <property type="entry name" value="Myosin_head"/>
    <property type="match status" value="1"/>
</dbReference>
<dbReference type="Pfam" id="PF02736">
    <property type="entry name" value="Myosin_N"/>
    <property type="match status" value="1"/>
</dbReference>
<dbReference type="PRINTS" id="PR00193">
    <property type="entry name" value="MYOSINHEAVY"/>
</dbReference>
<dbReference type="SMART" id="SM01132">
    <property type="entry name" value="DIL"/>
    <property type="match status" value="1"/>
</dbReference>
<dbReference type="SMART" id="SM00015">
    <property type="entry name" value="IQ"/>
    <property type="match status" value="6"/>
</dbReference>
<dbReference type="SMART" id="SM00242">
    <property type="entry name" value="MYSc"/>
    <property type="match status" value="1"/>
</dbReference>
<dbReference type="SUPFAM" id="SSF52540">
    <property type="entry name" value="P-loop containing nucleoside triphosphate hydrolases"/>
    <property type="match status" value="2"/>
</dbReference>
<dbReference type="PROSITE" id="PS51126">
    <property type="entry name" value="DILUTE"/>
    <property type="match status" value="1"/>
</dbReference>
<dbReference type="PROSITE" id="PS50096">
    <property type="entry name" value="IQ"/>
    <property type="match status" value="5"/>
</dbReference>
<dbReference type="PROSITE" id="PS51456">
    <property type="entry name" value="MYOSIN_MOTOR"/>
    <property type="match status" value="1"/>
</dbReference>
<dbReference type="PROSITE" id="PS51844">
    <property type="entry name" value="SH3_LIKE"/>
    <property type="match status" value="1"/>
</dbReference>
<accession>F4I460</accession>
<accession>O64491</accession>
<organism>
    <name type="scientific">Arabidopsis thaliana</name>
    <name type="common">Mouse-ear cress</name>
    <dbReference type="NCBI Taxonomy" id="3702"/>
    <lineage>
        <taxon>Eukaryota</taxon>
        <taxon>Viridiplantae</taxon>
        <taxon>Streptophyta</taxon>
        <taxon>Embryophyta</taxon>
        <taxon>Tracheophyta</taxon>
        <taxon>Spermatophyta</taxon>
        <taxon>Magnoliopsida</taxon>
        <taxon>eudicotyledons</taxon>
        <taxon>Gunneridae</taxon>
        <taxon>Pentapetalae</taxon>
        <taxon>rosids</taxon>
        <taxon>malvids</taxon>
        <taxon>Brassicales</taxon>
        <taxon>Brassicaceae</taxon>
        <taxon>Camelineae</taxon>
        <taxon>Arabidopsis</taxon>
    </lineage>
</organism>
<feature type="chain" id="PRO_0000422863" description="Myosin-8">
    <location>
        <begin position="1"/>
        <end position="1500"/>
    </location>
</feature>
<feature type="domain" description="Myosin N-terminal SH3-like" evidence="6">
    <location>
        <begin position="8"/>
        <end position="57"/>
    </location>
</feature>
<feature type="domain" description="Myosin motor" evidence="5">
    <location>
        <begin position="62"/>
        <end position="732"/>
    </location>
</feature>
<feature type="domain" description="IQ 1" evidence="3">
    <location>
        <begin position="735"/>
        <end position="764"/>
    </location>
</feature>
<feature type="domain" description="IQ 2" evidence="3">
    <location>
        <begin position="758"/>
        <end position="787"/>
    </location>
</feature>
<feature type="domain" description="IQ 3" evidence="3">
    <location>
        <begin position="783"/>
        <end position="812"/>
    </location>
</feature>
<feature type="domain" description="IQ 4" evidence="3">
    <location>
        <begin position="806"/>
        <end position="835"/>
    </location>
</feature>
<feature type="domain" description="IQ 5" evidence="3">
    <location>
        <begin position="831"/>
        <end position="860"/>
    </location>
</feature>
<feature type="domain" description="IQ 6" evidence="3">
    <location>
        <begin position="854"/>
        <end position="883"/>
    </location>
</feature>
<feature type="domain" description="Dilute" evidence="4">
    <location>
        <begin position="1146"/>
        <end position="1447"/>
    </location>
</feature>
<feature type="region of interest" description="Actin-binding" evidence="2">
    <location>
        <begin position="496"/>
        <end position="530"/>
    </location>
</feature>
<feature type="region of interest" description="Actin-binding" evidence="2">
    <location>
        <begin position="532"/>
        <end position="555"/>
    </location>
</feature>
<feature type="region of interest" description="Actin-binding" evidence="2">
    <location>
        <begin position="590"/>
        <end position="613"/>
    </location>
</feature>
<feature type="region of interest" description="Actin-binding" evidence="1">
    <location>
        <begin position="613"/>
        <end position="635"/>
    </location>
</feature>
<feature type="coiled-coil region" evidence="2">
    <location>
        <begin position="884"/>
        <end position="1049"/>
    </location>
</feature>
<feature type="binding site" evidence="2">
    <location>
        <begin position="156"/>
        <end position="163"/>
    </location>
    <ligand>
        <name>ATP</name>
        <dbReference type="ChEBI" id="CHEBI:30616"/>
    </ligand>
</feature>
<feature type="binding site" evidence="2">
    <location>
        <begin position="210"/>
        <end position="218"/>
    </location>
    <ligand>
        <name>ATP</name>
        <dbReference type="ChEBI" id="CHEBI:30616"/>
    </ligand>
</feature>
<protein>
    <recommendedName>
        <fullName>Myosin-8</fullName>
    </recommendedName>
    <alternativeName>
        <fullName>Myosin XI B</fullName>
        <shortName>AtXIB</shortName>
    </alternativeName>
</protein>
<name>MYO8_ARATH</name>